<gene>
    <name type="primary">TPP2</name>
    <name type="ordered locus">At4g20850</name>
    <name type="ORF">T13K14.10</name>
</gene>
<dbReference type="EC" id="3.4.14.10" evidence="4 5"/>
<dbReference type="EMBL" id="AL080282">
    <property type="protein sequence ID" value="CAB45880.1"/>
    <property type="status" value="ALT_SEQ"/>
    <property type="molecule type" value="Genomic_DNA"/>
</dbReference>
<dbReference type="EMBL" id="AL161553">
    <property type="protein sequence ID" value="CAB79085.1"/>
    <property type="status" value="ALT_SEQ"/>
    <property type="molecule type" value="Genomic_DNA"/>
</dbReference>
<dbReference type="EMBL" id="CP002687">
    <property type="protein sequence ID" value="AEE84368.1"/>
    <property type="molecule type" value="Genomic_DNA"/>
</dbReference>
<dbReference type="EMBL" id="AY096651">
    <property type="protein sequence ID" value="AAM20148.1"/>
    <property type="molecule type" value="mRNA"/>
</dbReference>
<dbReference type="PIR" id="T10627">
    <property type="entry name" value="T10627"/>
</dbReference>
<dbReference type="RefSeq" id="NP_193817.2">
    <property type="nucleotide sequence ID" value="NM_118203.4"/>
</dbReference>
<dbReference type="SMR" id="F4JVN6"/>
<dbReference type="BioGRID" id="13124">
    <property type="interactions" value="36"/>
</dbReference>
<dbReference type="FunCoup" id="F4JVN6">
    <property type="interactions" value="4230"/>
</dbReference>
<dbReference type="IntAct" id="F4JVN6">
    <property type="interactions" value="1"/>
</dbReference>
<dbReference type="STRING" id="3702.F4JVN6"/>
<dbReference type="MEROPS" id="S08.A56"/>
<dbReference type="iPTMnet" id="F4JVN6"/>
<dbReference type="MetOSite" id="F4JVN6"/>
<dbReference type="PaxDb" id="3702-AT4G20850.1"/>
<dbReference type="ProMEX" id="F4JVN6"/>
<dbReference type="ProteomicsDB" id="245255"/>
<dbReference type="EnsemblPlants" id="AT4G20850.1">
    <property type="protein sequence ID" value="AT4G20850.1"/>
    <property type="gene ID" value="AT4G20850"/>
</dbReference>
<dbReference type="GeneID" id="827833"/>
<dbReference type="Gramene" id="AT4G20850.1">
    <property type="protein sequence ID" value="AT4G20850.1"/>
    <property type="gene ID" value="AT4G20850"/>
</dbReference>
<dbReference type="KEGG" id="ath:AT4G20850"/>
<dbReference type="Araport" id="AT4G20850"/>
<dbReference type="TAIR" id="AT4G20850">
    <property type="gene designation" value="TPP2"/>
</dbReference>
<dbReference type="eggNOG" id="KOG1114">
    <property type="taxonomic scope" value="Eukaryota"/>
</dbReference>
<dbReference type="HOGENOM" id="CLU_003084_1_0_1"/>
<dbReference type="InParanoid" id="F4JVN6"/>
<dbReference type="OMA" id="SLRDFQC"/>
<dbReference type="CD-CODE" id="4299E36E">
    <property type="entry name" value="Nucleolus"/>
</dbReference>
<dbReference type="PRO" id="PR:F4JVN6"/>
<dbReference type="Proteomes" id="UP000006548">
    <property type="component" value="Chromosome 4"/>
</dbReference>
<dbReference type="ExpressionAtlas" id="F4JVN6">
    <property type="expression patterns" value="baseline and differential"/>
</dbReference>
<dbReference type="GO" id="GO:0009507">
    <property type="term" value="C:chloroplast"/>
    <property type="evidence" value="ECO:0007005"/>
    <property type="project" value="TAIR"/>
</dbReference>
<dbReference type="GO" id="GO:0005737">
    <property type="term" value="C:cytoplasm"/>
    <property type="evidence" value="ECO:0000314"/>
    <property type="project" value="TAIR"/>
</dbReference>
<dbReference type="GO" id="GO:0005829">
    <property type="term" value="C:cytosol"/>
    <property type="evidence" value="ECO:0007005"/>
    <property type="project" value="TAIR"/>
</dbReference>
<dbReference type="GO" id="GO:0022626">
    <property type="term" value="C:cytosolic ribosome"/>
    <property type="evidence" value="ECO:0007005"/>
    <property type="project" value="TAIR"/>
</dbReference>
<dbReference type="GO" id="GO:0000325">
    <property type="term" value="C:plant-type vacuole"/>
    <property type="evidence" value="ECO:0007005"/>
    <property type="project" value="TAIR"/>
</dbReference>
<dbReference type="GO" id="GO:0005773">
    <property type="term" value="C:vacuole"/>
    <property type="evidence" value="ECO:0007005"/>
    <property type="project" value="TAIR"/>
</dbReference>
<dbReference type="GO" id="GO:0004177">
    <property type="term" value="F:aminopeptidase activity"/>
    <property type="evidence" value="ECO:0007669"/>
    <property type="project" value="UniProtKB-KW"/>
</dbReference>
<dbReference type="GO" id="GO:0003729">
    <property type="term" value="F:mRNA binding"/>
    <property type="evidence" value="ECO:0000314"/>
    <property type="project" value="TAIR"/>
</dbReference>
<dbReference type="GO" id="GO:1901149">
    <property type="term" value="F:salicylic acid binding"/>
    <property type="evidence" value="ECO:0007005"/>
    <property type="project" value="TAIR"/>
</dbReference>
<dbReference type="GO" id="GO:0004252">
    <property type="term" value="F:serine-type endopeptidase activity"/>
    <property type="evidence" value="ECO:0007669"/>
    <property type="project" value="InterPro"/>
</dbReference>
<dbReference type="GO" id="GO:0008240">
    <property type="term" value="F:tripeptidyl-peptidase activity"/>
    <property type="evidence" value="ECO:0000314"/>
    <property type="project" value="TAIR"/>
</dbReference>
<dbReference type="GO" id="GO:0006508">
    <property type="term" value="P:proteolysis"/>
    <property type="evidence" value="ECO:0000314"/>
    <property type="project" value="TAIR"/>
</dbReference>
<dbReference type="CDD" id="cd04857">
    <property type="entry name" value="Peptidases_S8_Tripeptidyl_Aminopeptidase_II"/>
    <property type="match status" value="1"/>
</dbReference>
<dbReference type="FunFam" id="1.25.40.710:FF:000002">
    <property type="entry name" value="Tripeptidyl-peptidase 2"/>
    <property type="match status" value="1"/>
</dbReference>
<dbReference type="FunFam" id="2.60.40.3170:FF:000002">
    <property type="entry name" value="Tripeptidyl-peptidase 2"/>
    <property type="match status" value="1"/>
</dbReference>
<dbReference type="FunFam" id="3.40.50.200:FF:000013">
    <property type="entry name" value="Tripeptidyl-peptidase 2 homolog"/>
    <property type="match status" value="1"/>
</dbReference>
<dbReference type="FunFam" id="3.40.50.200:FF:000009">
    <property type="entry name" value="tripeptidyl-peptidase 2 isoform X1"/>
    <property type="match status" value="1"/>
</dbReference>
<dbReference type="Gene3D" id="1.25.40.710">
    <property type="match status" value="1"/>
</dbReference>
<dbReference type="Gene3D" id="2.60.40.3170">
    <property type="match status" value="1"/>
</dbReference>
<dbReference type="Gene3D" id="6.10.250.3080">
    <property type="match status" value="1"/>
</dbReference>
<dbReference type="Gene3D" id="3.40.50.200">
    <property type="entry name" value="Peptidase S8/S53 domain"/>
    <property type="match status" value="2"/>
</dbReference>
<dbReference type="InterPro" id="IPR000209">
    <property type="entry name" value="Peptidase_S8/S53_dom"/>
</dbReference>
<dbReference type="InterPro" id="IPR036852">
    <property type="entry name" value="Peptidase_S8/S53_dom_sf"/>
</dbReference>
<dbReference type="InterPro" id="IPR022398">
    <property type="entry name" value="Peptidase_S8_His-AS"/>
</dbReference>
<dbReference type="InterPro" id="IPR023828">
    <property type="entry name" value="Peptidase_S8_Ser-AS"/>
</dbReference>
<dbReference type="InterPro" id="IPR050131">
    <property type="entry name" value="Peptidase_S8_subtilisin-like"/>
</dbReference>
<dbReference type="InterPro" id="IPR015500">
    <property type="entry name" value="Peptidase_S8_subtilisin-rel"/>
</dbReference>
<dbReference type="InterPro" id="IPR034051">
    <property type="entry name" value="TPP_II_domain"/>
</dbReference>
<dbReference type="InterPro" id="IPR046939">
    <property type="entry name" value="TPPII_C_sf"/>
</dbReference>
<dbReference type="InterPro" id="IPR048384">
    <property type="entry name" value="TPPII_GBD"/>
</dbReference>
<dbReference type="InterPro" id="IPR048383">
    <property type="entry name" value="TPPII_Ig-like-1"/>
</dbReference>
<dbReference type="InterPro" id="IPR022229">
    <property type="entry name" value="TPPII_Ig-like-2"/>
</dbReference>
<dbReference type="InterPro" id="IPR046940">
    <property type="entry name" value="TPPII_Ig-like_sf"/>
</dbReference>
<dbReference type="PANTHER" id="PTHR43806">
    <property type="entry name" value="PEPTIDASE S8"/>
    <property type="match status" value="1"/>
</dbReference>
<dbReference type="PANTHER" id="PTHR43806:SF14">
    <property type="entry name" value="TRIPEPTIDYL-PEPTIDASE 2"/>
    <property type="match status" value="1"/>
</dbReference>
<dbReference type="Pfam" id="PF00082">
    <property type="entry name" value="Peptidase_S8"/>
    <property type="match status" value="1"/>
</dbReference>
<dbReference type="Pfam" id="PF12580">
    <property type="entry name" value="TPPII"/>
    <property type="match status" value="1"/>
</dbReference>
<dbReference type="Pfam" id="PF21316">
    <property type="entry name" value="TPPII_GBD"/>
    <property type="match status" value="1"/>
</dbReference>
<dbReference type="Pfam" id="PF21223">
    <property type="entry name" value="TPPII_Ig-like-1"/>
    <property type="match status" value="1"/>
</dbReference>
<dbReference type="PRINTS" id="PR00723">
    <property type="entry name" value="SUBTILISIN"/>
</dbReference>
<dbReference type="SUPFAM" id="SSF52743">
    <property type="entry name" value="Subtilisin-like"/>
    <property type="match status" value="1"/>
</dbReference>
<dbReference type="PROSITE" id="PS51892">
    <property type="entry name" value="SUBTILASE"/>
    <property type="match status" value="1"/>
</dbReference>
<dbReference type="PROSITE" id="PS00137">
    <property type="entry name" value="SUBTILASE_HIS"/>
    <property type="match status" value="1"/>
</dbReference>
<dbReference type="PROSITE" id="PS00138">
    <property type="entry name" value="SUBTILASE_SER"/>
    <property type="match status" value="1"/>
</dbReference>
<reference key="1">
    <citation type="journal article" date="1999" name="Nature">
        <title>Sequence and analysis of chromosome 4 of the plant Arabidopsis thaliana.</title>
        <authorList>
            <person name="Mayer K.F.X."/>
            <person name="Schueller C."/>
            <person name="Wambutt R."/>
            <person name="Murphy G."/>
            <person name="Volckaert G."/>
            <person name="Pohl T."/>
            <person name="Duesterhoeft A."/>
            <person name="Stiekema W."/>
            <person name="Entian K.-D."/>
            <person name="Terryn N."/>
            <person name="Harris B."/>
            <person name="Ansorge W."/>
            <person name="Brandt P."/>
            <person name="Grivell L.A."/>
            <person name="Rieger M."/>
            <person name="Weichselgartner M."/>
            <person name="de Simone V."/>
            <person name="Obermaier B."/>
            <person name="Mache R."/>
            <person name="Mueller M."/>
            <person name="Kreis M."/>
            <person name="Delseny M."/>
            <person name="Puigdomenech P."/>
            <person name="Watson M."/>
            <person name="Schmidtheini T."/>
            <person name="Reichert B."/>
            <person name="Portetelle D."/>
            <person name="Perez-Alonso M."/>
            <person name="Boutry M."/>
            <person name="Bancroft I."/>
            <person name="Vos P."/>
            <person name="Hoheisel J."/>
            <person name="Zimmermann W."/>
            <person name="Wedler H."/>
            <person name="Ridley P."/>
            <person name="Langham S.-A."/>
            <person name="McCullagh B."/>
            <person name="Bilham L."/>
            <person name="Robben J."/>
            <person name="van der Schueren J."/>
            <person name="Grymonprez B."/>
            <person name="Chuang Y.-J."/>
            <person name="Vandenbussche F."/>
            <person name="Braeken M."/>
            <person name="Weltjens I."/>
            <person name="Voet M."/>
            <person name="Bastiaens I."/>
            <person name="Aert R."/>
            <person name="Defoor E."/>
            <person name="Weitzenegger T."/>
            <person name="Bothe G."/>
            <person name="Ramsperger U."/>
            <person name="Hilbert H."/>
            <person name="Braun M."/>
            <person name="Holzer E."/>
            <person name="Brandt A."/>
            <person name="Peters S."/>
            <person name="van Staveren M."/>
            <person name="Dirkse W."/>
            <person name="Mooijman P."/>
            <person name="Klein Lankhorst R."/>
            <person name="Rose M."/>
            <person name="Hauf J."/>
            <person name="Koetter P."/>
            <person name="Berneiser S."/>
            <person name="Hempel S."/>
            <person name="Feldpausch M."/>
            <person name="Lamberth S."/>
            <person name="Van den Daele H."/>
            <person name="De Keyser A."/>
            <person name="Buysshaert C."/>
            <person name="Gielen J."/>
            <person name="Villarroel R."/>
            <person name="De Clercq R."/>
            <person name="van Montagu M."/>
            <person name="Rogers J."/>
            <person name="Cronin A."/>
            <person name="Quail M.A."/>
            <person name="Bray-Allen S."/>
            <person name="Clark L."/>
            <person name="Doggett J."/>
            <person name="Hall S."/>
            <person name="Kay M."/>
            <person name="Lennard N."/>
            <person name="McLay K."/>
            <person name="Mayes R."/>
            <person name="Pettett A."/>
            <person name="Rajandream M.A."/>
            <person name="Lyne M."/>
            <person name="Benes V."/>
            <person name="Rechmann S."/>
            <person name="Borkova D."/>
            <person name="Bloecker H."/>
            <person name="Scharfe M."/>
            <person name="Grimm M."/>
            <person name="Loehnert T.-H."/>
            <person name="Dose S."/>
            <person name="de Haan M."/>
            <person name="Maarse A.C."/>
            <person name="Schaefer M."/>
            <person name="Mueller-Auer S."/>
            <person name="Gabel C."/>
            <person name="Fuchs M."/>
            <person name="Fartmann B."/>
            <person name="Granderath K."/>
            <person name="Dauner D."/>
            <person name="Herzl A."/>
            <person name="Neumann S."/>
            <person name="Argiriou A."/>
            <person name="Vitale D."/>
            <person name="Liguori R."/>
            <person name="Piravandi E."/>
            <person name="Massenet O."/>
            <person name="Quigley F."/>
            <person name="Clabauld G."/>
            <person name="Muendlein A."/>
            <person name="Felber R."/>
            <person name="Schnabl S."/>
            <person name="Hiller R."/>
            <person name="Schmidt W."/>
            <person name="Lecharny A."/>
            <person name="Aubourg S."/>
            <person name="Chefdor F."/>
            <person name="Cooke R."/>
            <person name="Berger C."/>
            <person name="Monfort A."/>
            <person name="Casacuberta E."/>
            <person name="Gibbons T."/>
            <person name="Weber N."/>
            <person name="Vandenbol M."/>
            <person name="Bargues M."/>
            <person name="Terol J."/>
            <person name="Torres A."/>
            <person name="Perez-Perez A."/>
            <person name="Purnelle B."/>
            <person name="Bent E."/>
            <person name="Johnson S."/>
            <person name="Tacon D."/>
            <person name="Jesse T."/>
            <person name="Heijnen L."/>
            <person name="Schwarz S."/>
            <person name="Scholler P."/>
            <person name="Heber S."/>
            <person name="Francs P."/>
            <person name="Bielke C."/>
            <person name="Frishman D."/>
            <person name="Haase D."/>
            <person name="Lemcke K."/>
            <person name="Mewes H.-W."/>
            <person name="Stocker S."/>
            <person name="Zaccaria P."/>
            <person name="Bevan M."/>
            <person name="Wilson R.K."/>
            <person name="de la Bastide M."/>
            <person name="Habermann K."/>
            <person name="Parnell L."/>
            <person name="Dedhia N."/>
            <person name="Gnoj L."/>
            <person name="Schutz K."/>
            <person name="Huang E."/>
            <person name="Spiegel L."/>
            <person name="Sekhon M."/>
            <person name="Murray J."/>
            <person name="Sheet P."/>
            <person name="Cordes M."/>
            <person name="Abu-Threideh J."/>
            <person name="Stoneking T."/>
            <person name="Kalicki J."/>
            <person name="Graves T."/>
            <person name="Harmon G."/>
            <person name="Edwards J."/>
            <person name="Latreille P."/>
            <person name="Courtney L."/>
            <person name="Cloud J."/>
            <person name="Abbott A."/>
            <person name="Scott K."/>
            <person name="Johnson D."/>
            <person name="Minx P."/>
            <person name="Bentley D."/>
            <person name="Fulton B."/>
            <person name="Miller N."/>
            <person name="Greco T."/>
            <person name="Kemp K."/>
            <person name="Kramer J."/>
            <person name="Fulton L."/>
            <person name="Mardis E."/>
            <person name="Dante M."/>
            <person name="Pepin K."/>
            <person name="Hillier L.W."/>
            <person name="Nelson J."/>
            <person name="Spieth J."/>
            <person name="Ryan E."/>
            <person name="Andrews S."/>
            <person name="Geisel C."/>
            <person name="Layman D."/>
            <person name="Du H."/>
            <person name="Ali J."/>
            <person name="Berghoff A."/>
            <person name="Jones K."/>
            <person name="Drone K."/>
            <person name="Cotton M."/>
            <person name="Joshu C."/>
            <person name="Antonoiu B."/>
            <person name="Zidanic M."/>
            <person name="Strong C."/>
            <person name="Sun H."/>
            <person name="Lamar B."/>
            <person name="Yordan C."/>
            <person name="Ma P."/>
            <person name="Zhong J."/>
            <person name="Preston R."/>
            <person name="Vil D."/>
            <person name="Shekher M."/>
            <person name="Matero A."/>
            <person name="Shah R."/>
            <person name="Swaby I.K."/>
            <person name="O'Shaughnessy A."/>
            <person name="Rodriguez M."/>
            <person name="Hoffman J."/>
            <person name="Till S."/>
            <person name="Granat S."/>
            <person name="Shohdy N."/>
            <person name="Hasegawa A."/>
            <person name="Hameed A."/>
            <person name="Lodhi M."/>
            <person name="Johnson A."/>
            <person name="Chen E."/>
            <person name="Marra M.A."/>
            <person name="Martienssen R."/>
            <person name="McCombie W.R."/>
        </authorList>
    </citation>
    <scope>NUCLEOTIDE SEQUENCE [LARGE SCALE GENOMIC DNA]</scope>
    <source>
        <strain>cv. Columbia</strain>
    </source>
</reference>
<reference key="2">
    <citation type="journal article" date="2017" name="Plant J.">
        <title>Araport11: a complete reannotation of the Arabidopsis thaliana reference genome.</title>
        <authorList>
            <person name="Cheng C.Y."/>
            <person name="Krishnakumar V."/>
            <person name="Chan A.P."/>
            <person name="Thibaud-Nissen F."/>
            <person name="Schobel S."/>
            <person name="Town C.D."/>
        </authorList>
    </citation>
    <scope>GENOME REANNOTATION</scope>
    <source>
        <strain>cv. Columbia</strain>
    </source>
</reference>
<reference key="3">
    <citation type="journal article" date="2003" name="Science">
        <title>Empirical analysis of transcriptional activity in the Arabidopsis genome.</title>
        <authorList>
            <person name="Yamada K."/>
            <person name="Lim J."/>
            <person name="Dale J.M."/>
            <person name="Chen H."/>
            <person name="Shinn P."/>
            <person name="Palm C.J."/>
            <person name="Southwick A.M."/>
            <person name="Wu H.C."/>
            <person name="Kim C.J."/>
            <person name="Nguyen M."/>
            <person name="Pham P.K."/>
            <person name="Cheuk R.F."/>
            <person name="Karlin-Newmann G."/>
            <person name="Liu S.X."/>
            <person name="Lam B."/>
            <person name="Sakano H."/>
            <person name="Wu T."/>
            <person name="Yu G."/>
            <person name="Miranda M."/>
            <person name="Quach H.L."/>
            <person name="Tripp M."/>
            <person name="Chang C.H."/>
            <person name="Lee J.M."/>
            <person name="Toriumi M.J."/>
            <person name="Chan M.M."/>
            <person name="Tang C.C."/>
            <person name="Onodera C.S."/>
            <person name="Deng J.M."/>
            <person name="Akiyama K."/>
            <person name="Ansari Y."/>
            <person name="Arakawa T."/>
            <person name="Banh J."/>
            <person name="Banno F."/>
            <person name="Bowser L."/>
            <person name="Brooks S.Y."/>
            <person name="Carninci P."/>
            <person name="Chao Q."/>
            <person name="Choy N."/>
            <person name="Enju A."/>
            <person name="Goldsmith A.D."/>
            <person name="Gurjal M."/>
            <person name="Hansen N.F."/>
            <person name="Hayashizaki Y."/>
            <person name="Johnson-Hopson C."/>
            <person name="Hsuan V.W."/>
            <person name="Iida K."/>
            <person name="Karnes M."/>
            <person name="Khan S."/>
            <person name="Koesema E."/>
            <person name="Ishida J."/>
            <person name="Jiang P.X."/>
            <person name="Jones T."/>
            <person name="Kawai J."/>
            <person name="Kamiya A."/>
            <person name="Meyers C."/>
            <person name="Nakajima M."/>
            <person name="Narusaka M."/>
            <person name="Seki M."/>
            <person name="Sakurai T."/>
            <person name="Satou M."/>
            <person name="Tamse R."/>
            <person name="Vaysberg M."/>
            <person name="Wallender E.K."/>
            <person name="Wong C."/>
            <person name="Yamamura Y."/>
            <person name="Yuan S."/>
            <person name="Shinozaki K."/>
            <person name="Davis R.W."/>
            <person name="Theologis A."/>
            <person name="Ecker J.R."/>
        </authorList>
    </citation>
    <scope>NUCLEOTIDE SEQUENCE [LARGE SCALE MRNA] OF 35-1380</scope>
    <source>
        <strain>cv. Columbia</strain>
    </source>
</reference>
<reference key="4">
    <citation type="journal article" date="2005" name="Plant Physiol.">
        <title>Tripeptidyl peptidase II. An oligomeric protease complex from Arabidopsis.</title>
        <authorList>
            <person name="Book A.J."/>
            <person name="Yang P."/>
            <person name="Scalf M."/>
            <person name="Smith L.M."/>
            <person name="Vierstra R.D."/>
        </authorList>
    </citation>
    <scope>IDENTIFICATION BY MASS SPECTROMETRY</scope>
    <scope>FUNCTION</scope>
    <scope>CATALYTIC ACTIVITY</scope>
    <scope>SUBUNIT</scope>
    <scope>DISRUPTION PHENOTYPE</scope>
</reference>
<reference key="5">
    <citation type="journal article" date="2009" name="J. Biol. Chem.">
        <title>Evidence for the existence in Arabidopsis thaliana of the proteasome proteolytic pathway: ACTIVATION IN RESPONSE TO CADMIUM.</title>
        <authorList>
            <person name="Polge C."/>
            <person name="Jaquinod M."/>
            <person name="Holzer F."/>
            <person name="Bourguignon J."/>
            <person name="Walling L."/>
            <person name="Brouquisse R."/>
        </authorList>
    </citation>
    <scope>IDENTIFICATION BY MASS SPECTROMETRY</scope>
    <scope>FUNCTION</scope>
    <scope>CATALYTIC ACTIVITY</scope>
    <scope>INDUCTION BY CADMIUM</scope>
</reference>
<evidence type="ECO:0000255" key="1"/>
<evidence type="ECO:0000255" key="2">
    <source>
        <dbReference type="PROSITE-ProRule" id="PRU01240"/>
    </source>
</evidence>
<evidence type="ECO:0000256" key="3">
    <source>
        <dbReference type="SAM" id="MobiDB-lite"/>
    </source>
</evidence>
<evidence type="ECO:0000269" key="4">
    <source>
    </source>
</evidence>
<evidence type="ECO:0000269" key="5">
    <source>
    </source>
</evidence>
<evidence type="ECO:0000305" key="6"/>
<comment type="function">
    <text evidence="4 5">Serine protease of the proteasome pathway that may function with the 20S proteasome to degrade oxidized proteins generated by environmental stress.</text>
</comment>
<comment type="catalytic activity">
    <reaction evidence="4 5">
        <text>Release of an N-terminal tripeptide from a polypeptide.</text>
        <dbReference type="EC" id="3.4.14.10"/>
    </reaction>
</comment>
<comment type="activity regulation">
    <text>Inhibited by alanine-alanine-phenylalanine-chloromethylketone, butabindide and phenylmethanesulfonyl fluoride (PMSF), but not by leupeptin, N-ethylmaleimide, EDTA, MG132 and lactacystin.</text>
</comment>
<comment type="subunit">
    <text evidence="4">Assembles into a large oligomeric complex containing two related proteins 153 and 142 kDa that are derived from the single TPP2 gene. The 142 kDa form mainly differs from the 153 kDa form by a truncation at the C-terminal end.</text>
</comment>
<comment type="induction">
    <text evidence="5">By cadmium (at protein level).</text>
</comment>
<comment type="disruption phenotype">
    <text evidence="4">No visible phenotype under normal growth conditions.</text>
</comment>
<comment type="similarity">
    <text evidence="6">Belongs to the peptidase S8 family.</text>
</comment>
<comment type="sequence caution" evidence="6">
    <conflict type="erroneous gene model prediction">
        <sequence resource="EMBL-CDS" id="CAB45880"/>
    </conflict>
</comment>
<comment type="sequence caution" evidence="6">
    <conflict type="erroneous gene model prediction">
        <sequence resource="EMBL-CDS" id="CAB79085"/>
    </conflict>
</comment>
<keyword id="KW-0031">Aminopeptidase</keyword>
<keyword id="KW-0175">Coiled coil</keyword>
<keyword id="KW-0378">Hydrolase</keyword>
<keyword id="KW-0645">Protease</keyword>
<keyword id="KW-1185">Reference proteome</keyword>
<keyword id="KW-0720">Serine protease</keyword>
<keyword id="KW-0346">Stress response</keyword>
<protein>
    <recommendedName>
        <fullName>Tripeptidyl-peptidase 2</fullName>
        <ecNumber evidence="4 5">3.4.14.10</ecNumber>
    </recommendedName>
    <alternativeName>
        <fullName>Tripeptidyl-peptidase II</fullName>
        <shortName>TPPII</shortName>
    </alternativeName>
</protein>
<feature type="chain" id="PRO_0000429313" description="Tripeptidyl-peptidase 2">
    <location>
        <begin position="1"/>
        <end position="1380"/>
    </location>
</feature>
<feature type="domain" description="Peptidase S8" evidence="2">
    <location>
        <begin position="110"/>
        <end position="619"/>
    </location>
</feature>
<feature type="region of interest" description="Disordered" evidence="3">
    <location>
        <begin position="1099"/>
        <end position="1143"/>
    </location>
</feature>
<feature type="coiled-coil region" evidence="1">
    <location>
        <begin position="1152"/>
        <end position="1181"/>
    </location>
</feature>
<feature type="coiled-coil region" evidence="1">
    <location>
        <begin position="1238"/>
        <end position="1300"/>
    </location>
</feature>
<feature type="compositionally biased region" description="Low complexity" evidence="3">
    <location>
        <begin position="1110"/>
        <end position="1120"/>
    </location>
</feature>
<feature type="active site" description="Charge relay system" evidence="2">
    <location>
        <position position="145"/>
    </location>
</feature>
<feature type="active site" description="Charge relay system" evidence="2">
    <location>
        <position position="372"/>
    </location>
</feature>
<feature type="active site" description="Charge relay system" evidence="2">
    <location>
        <position position="558"/>
    </location>
</feature>
<proteinExistence type="evidence at protein level"/>
<organism>
    <name type="scientific">Arabidopsis thaliana</name>
    <name type="common">Mouse-ear cress</name>
    <dbReference type="NCBI Taxonomy" id="3702"/>
    <lineage>
        <taxon>Eukaryota</taxon>
        <taxon>Viridiplantae</taxon>
        <taxon>Streptophyta</taxon>
        <taxon>Embryophyta</taxon>
        <taxon>Tracheophyta</taxon>
        <taxon>Spermatophyta</taxon>
        <taxon>Magnoliopsida</taxon>
        <taxon>eudicotyledons</taxon>
        <taxon>Gunneridae</taxon>
        <taxon>Pentapetalae</taxon>
        <taxon>rosids</taxon>
        <taxon>malvids</taxon>
        <taxon>Brassicales</taxon>
        <taxon>Brassicaceae</taxon>
        <taxon>Camelineae</taxon>
        <taxon>Arabidopsis</taxon>
    </lineage>
</organism>
<sequence length="1380" mass="152368">MDLSLQLQIHGALINKGPSCTSYWASSSSLSLPRDFISSSTFLLHRRLRRRSCSRSRGIRLRRSGFSAMPCSSSDTLTASRVGCGGGGGGGAVGGGAENASVANFKLNESTFIASLMPKKEIRADCFIEAHPEYDGRGVVIAIFDSGFDPSAAGLHVTSDGKPKVLDVIDCTGSGDIDTSTVVKANEDGHIRGASGATLVVNSSWKNPTGEWRVGSKLVYQLFTDDLTSRVKKERRKSWDEKNQEEIAKAVNNLYDFDQKHSKVEDAKLKKTREDLQSKVDFLKKQADKYEDKGPVIDAVVWHDGEVWRVALDTQSLEEDPDSGKLADFSPLTNYRIERKYGVFSRLDACSFVANVYDEGKVLSIVTDSSPHGTHVAGIATAHHPEEHLLNGVAPGAQIISCKIGDSRLGSMETGTGLTRALIAALEHNCDLVNMSYGEPALLPDYGRFVDLVTEAVNKRRLIFVSSAGNSGPALTTVGAPGGTTSSIIGVGAYVSPAMAAGAHSVVEPPSEGLEYTWSSRGPTSDGDLGVCISAPGGAVAPVPTWTLQRRMLMNGTSMASPSACGAIALLLSAMKAEGIPVSPYSVRRALENTSTPVGDLPEDKLTTGQGLMQVDKAYEYLKQFQDYPCVFYQIKVNLSGKTIPTSRGIYLREGTACRQSTEWTIQVDPKFHEGASNLKELVPFEECLELHSTDEGVVRVPDYLLLTNNGRGFNVVVDPTNLGDGVHYFEVYGIDCKAPERGPLFRIPVTIIIPKTVANQPPVISFQQMSFISGHIERRYIEVPHGATWAEATMRTSGFDTTRRFYIDTLQVCPLRRPIKWESAPTFASPSAKSFVFPVVSGQTMELAIAQFWSSGLGSREPTIVDFEIEFHGVGVDKEELLLDGSEAPIKVEAEALLASEKLVPIAVLNKIRVPYQPIDAQLKTLSTGRDRLLSGKQILALTLTYKFKLEDSAEVKPYIPLLNNRIYDTKFESQFFMISDTNKRVYAMGDVYPESSKLPKGEYKLQLYLRHENVELLEKLKQLTVFIERNMGEIRLNLHSEPDGPFTGNGAFKSSVLMPGVKEAFYLGPPTKDKLPKNTPQGSMLVGEISYGKLSFDEKEGKNPKDNPVSYPISYVVPPNKPEEDKKAASAPTCSKSVSERLEQEVRDTKIKFLGNLKQETEEERSEWRKLCTCLKSEYPDYTPLLAKILEGLLSRSDAGDKISHHEEIIEAANEVVRSVDVDELARFLLDKTEPEDDEAEKLKKKMEVTRDQLADALYQKGLAMARIENLKGEKEGEGEEESSQKDKFEENFKELTKWVDVKSSKYGTLTVLREKRLSRLGTALKVLDDLIQNENETANKKLYELKLDLLEEIGWSHLVTYEKQWMQVRFPKSLPLF</sequence>
<accession>F4JVN6</accession>
<accession>Q8L640</accession>
<accession>Q9SUC7</accession>
<name>TPPII_ARATH</name>